<comment type="function">
    <text evidence="1">Catalyzes the decarboxylative condensation of pimeloyl-[acyl-carrier protein] and L-alanine to produce 8-amino-7-oxononanoate (AON), [acyl-carrier protein], and carbon dioxide.</text>
</comment>
<comment type="catalytic activity">
    <reaction evidence="1">
        <text>6-carboxyhexanoyl-[ACP] + L-alanine + H(+) = (8S)-8-amino-7-oxononanoate + holo-[ACP] + CO2</text>
        <dbReference type="Rhea" id="RHEA:42288"/>
        <dbReference type="Rhea" id="RHEA-COMP:9685"/>
        <dbReference type="Rhea" id="RHEA-COMP:9955"/>
        <dbReference type="ChEBI" id="CHEBI:15378"/>
        <dbReference type="ChEBI" id="CHEBI:16526"/>
        <dbReference type="ChEBI" id="CHEBI:57972"/>
        <dbReference type="ChEBI" id="CHEBI:64479"/>
        <dbReference type="ChEBI" id="CHEBI:78846"/>
        <dbReference type="ChEBI" id="CHEBI:149468"/>
        <dbReference type="EC" id="2.3.1.47"/>
    </reaction>
</comment>
<comment type="cofactor">
    <cofactor evidence="1">
        <name>pyridoxal 5'-phosphate</name>
        <dbReference type="ChEBI" id="CHEBI:597326"/>
    </cofactor>
</comment>
<comment type="pathway">
    <text evidence="1">Cofactor biosynthesis; biotin biosynthesis.</text>
</comment>
<comment type="subunit">
    <text evidence="1">Homodimer.</text>
</comment>
<comment type="similarity">
    <text evidence="1">Belongs to the class-II pyridoxal-phosphate-dependent aminotransferase family. BioF subfamily.</text>
</comment>
<protein>
    <recommendedName>
        <fullName evidence="1">8-amino-7-oxononanoate synthase</fullName>
        <shortName evidence="1">AONS</shortName>
        <ecNumber evidence="1">2.3.1.47</ecNumber>
    </recommendedName>
    <alternativeName>
        <fullName evidence="1">7-keto-8-amino-pelargonic acid synthase</fullName>
        <shortName evidence="1">7-KAP synthase</shortName>
        <shortName evidence="1">KAPA synthase</shortName>
    </alternativeName>
    <alternativeName>
        <fullName evidence="1">8-amino-7-ketopelargonate synthase</fullName>
    </alternativeName>
</protein>
<evidence type="ECO:0000255" key="1">
    <source>
        <dbReference type="HAMAP-Rule" id="MF_01693"/>
    </source>
</evidence>
<sequence length="384" mass="41624">MSWQDKINAALDARRAADALRRRYPVAQGAGRWLVADDRQYLNFSSNDYLGLSHHPQIIRAWKQSAEQFGVGSGGSGHVSGYSVAHQALEEELAEWLGYSRALLFISGFAANQAVIAAMMAKEDRIVADRLSHASLLEAASLSPSQLRRFVHNDVTHLARLLASPCPGQQMVVTEGVFSMDGDSAPLAEIQQVTQQHNGWLMVDDAHGTGVIGEQGRGSCWLQKVKPELLVVTFGKGFGVSGAAVLCSSTVADYLLQFARHLIYSTSMPPAQAQALRASLAVIRSDEGDARREKLAALITRFRAGVQDLPFTLADSCSAIQPLIVGDNSRALQLAEKLRQQGCWVTAIRPPTVPAGTARLRLTLTAAHEMQDIDRLLEVLHGNG</sequence>
<dbReference type="EC" id="2.3.1.47" evidence="1"/>
<dbReference type="EMBL" id="CP000946">
    <property type="protein sequence ID" value="ACA78495.1"/>
    <property type="molecule type" value="Genomic_DNA"/>
</dbReference>
<dbReference type="RefSeq" id="WP_000118797.1">
    <property type="nucleotide sequence ID" value="NZ_MTFT01000003.1"/>
</dbReference>
<dbReference type="SMR" id="B1IXJ2"/>
<dbReference type="KEGG" id="ecl:EcolC_2867"/>
<dbReference type="HOGENOM" id="CLU_015846_11_2_6"/>
<dbReference type="UniPathway" id="UPA00078"/>
<dbReference type="GO" id="GO:0008710">
    <property type="term" value="F:8-amino-7-oxononanoate synthase activity"/>
    <property type="evidence" value="ECO:0007669"/>
    <property type="project" value="UniProtKB-UniRule"/>
</dbReference>
<dbReference type="GO" id="GO:0030170">
    <property type="term" value="F:pyridoxal phosphate binding"/>
    <property type="evidence" value="ECO:0007669"/>
    <property type="project" value="UniProtKB-UniRule"/>
</dbReference>
<dbReference type="GO" id="GO:0009102">
    <property type="term" value="P:biotin biosynthetic process"/>
    <property type="evidence" value="ECO:0007669"/>
    <property type="project" value="UniProtKB-UniRule"/>
</dbReference>
<dbReference type="CDD" id="cd06454">
    <property type="entry name" value="KBL_like"/>
    <property type="match status" value="1"/>
</dbReference>
<dbReference type="FunFam" id="3.40.640.10:FF:000095">
    <property type="entry name" value="8-amino-7-oxononanoate synthase"/>
    <property type="match status" value="1"/>
</dbReference>
<dbReference type="FunFam" id="3.90.1150.10:FF:000036">
    <property type="entry name" value="8-amino-7-oxononanoate synthase"/>
    <property type="match status" value="1"/>
</dbReference>
<dbReference type="Gene3D" id="3.90.1150.10">
    <property type="entry name" value="Aspartate Aminotransferase, domain 1"/>
    <property type="match status" value="1"/>
</dbReference>
<dbReference type="Gene3D" id="3.40.640.10">
    <property type="entry name" value="Type I PLP-dependent aspartate aminotransferase-like (Major domain)"/>
    <property type="match status" value="1"/>
</dbReference>
<dbReference type="HAMAP" id="MF_01693">
    <property type="entry name" value="BioF_aminotrans_2"/>
    <property type="match status" value="1"/>
</dbReference>
<dbReference type="InterPro" id="IPR001917">
    <property type="entry name" value="Aminotrans_II_pyridoxalP_BS"/>
</dbReference>
<dbReference type="InterPro" id="IPR004839">
    <property type="entry name" value="Aminotransferase_I/II_large"/>
</dbReference>
<dbReference type="InterPro" id="IPR050087">
    <property type="entry name" value="AON_synthase_class-II"/>
</dbReference>
<dbReference type="InterPro" id="IPR004723">
    <property type="entry name" value="AONS_Archaea/Proteobacteria"/>
</dbReference>
<dbReference type="InterPro" id="IPR022834">
    <property type="entry name" value="AONS_Proteobacteria"/>
</dbReference>
<dbReference type="InterPro" id="IPR015424">
    <property type="entry name" value="PyrdxlP-dep_Trfase"/>
</dbReference>
<dbReference type="InterPro" id="IPR015421">
    <property type="entry name" value="PyrdxlP-dep_Trfase_major"/>
</dbReference>
<dbReference type="InterPro" id="IPR015422">
    <property type="entry name" value="PyrdxlP-dep_Trfase_small"/>
</dbReference>
<dbReference type="NCBIfam" id="TIGR00858">
    <property type="entry name" value="bioF"/>
    <property type="match status" value="1"/>
</dbReference>
<dbReference type="PANTHER" id="PTHR13693:SF100">
    <property type="entry name" value="8-AMINO-7-OXONONANOATE SYNTHASE"/>
    <property type="match status" value="1"/>
</dbReference>
<dbReference type="PANTHER" id="PTHR13693">
    <property type="entry name" value="CLASS II AMINOTRANSFERASE/8-AMINO-7-OXONONANOATE SYNTHASE"/>
    <property type="match status" value="1"/>
</dbReference>
<dbReference type="Pfam" id="PF00155">
    <property type="entry name" value="Aminotran_1_2"/>
    <property type="match status" value="1"/>
</dbReference>
<dbReference type="SUPFAM" id="SSF53383">
    <property type="entry name" value="PLP-dependent transferases"/>
    <property type="match status" value="1"/>
</dbReference>
<dbReference type="PROSITE" id="PS00599">
    <property type="entry name" value="AA_TRANSFER_CLASS_2"/>
    <property type="match status" value="1"/>
</dbReference>
<accession>B1IXJ2</accession>
<feature type="chain" id="PRO_0000380981" description="8-amino-7-oxononanoate synthase">
    <location>
        <begin position="1"/>
        <end position="384"/>
    </location>
</feature>
<feature type="binding site" evidence="1">
    <location>
        <position position="21"/>
    </location>
    <ligand>
        <name>substrate</name>
    </ligand>
</feature>
<feature type="binding site" evidence="1">
    <location>
        <begin position="108"/>
        <end position="109"/>
    </location>
    <ligand>
        <name>pyridoxal 5'-phosphate</name>
        <dbReference type="ChEBI" id="CHEBI:597326"/>
    </ligand>
</feature>
<feature type="binding site" evidence="1">
    <location>
        <position position="133"/>
    </location>
    <ligand>
        <name>substrate</name>
    </ligand>
</feature>
<feature type="binding site" evidence="1">
    <location>
        <position position="179"/>
    </location>
    <ligand>
        <name>pyridoxal 5'-phosphate</name>
        <dbReference type="ChEBI" id="CHEBI:597326"/>
    </ligand>
</feature>
<feature type="binding site" evidence="1">
    <location>
        <position position="207"/>
    </location>
    <ligand>
        <name>pyridoxal 5'-phosphate</name>
        <dbReference type="ChEBI" id="CHEBI:597326"/>
    </ligand>
</feature>
<feature type="binding site" evidence="1">
    <location>
        <position position="233"/>
    </location>
    <ligand>
        <name>pyridoxal 5'-phosphate</name>
        <dbReference type="ChEBI" id="CHEBI:597326"/>
    </ligand>
</feature>
<feature type="binding site" evidence="1">
    <location>
        <position position="352"/>
    </location>
    <ligand>
        <name>substrate</name>
    </ligand>
</feature>
<feature type="modified residue" description="N6-(pyridoxal phosphate)lysine" evidence="1">
    <location>
        <position position="236"/>
    </location>
</feature>
<proteinExistence type="inferred from homology"/>
<name>BIOF_ECOLC</name>
<gene>
    <name evidence="1" type="primary">bioF</name>
    <name type="ordered locus">EcolC_2867</name>
</gene>
<reference key="1">
    <citation type="submission" date="2008-02" db="EMBL/GenBank/DDBJ databases">
        <title>Complete sequence of Escherichia coli C str. ATCC 8739.</title>
        <authorList>
            <person name="Copeland A."/>
            <person name="Lucas S."/>
            <person name="Lapidus A."/>
            <person name="Glavina del Rio T."/>
            <person name="Dalin E."/>
            <person name="Tice H."/>
            <person name="Bruce D."/>
            <person name="Goodwin L."/>
            <person name="Pitluck S."/>
            <person name="Kiss H."/>
            <person name="Brettin T."/>
            <person name="Detter J.C."/>
            <person name="Han C."/>
            <person name="Kuske C.R."/>
            <person name="Schmutz J."/>
            <person name="Larimer F."/>
            <person name="Land M."/>
            <person name="Hauser L."/>
            <person name="Kyrpides N."/>
            <person name="Mikhailova N."/>
            <person name="Ingram L."/>
            <person name="Richardson P."/>
        </authorList>
    </citation>
    <scope>NUCLEOTIDE SEQUENCE [LARGE SCALE GENOMIC DNA]</scope>
    <source>
        <strain>ATCC 8739 / DSM 1576 / NBRC 3972 / NCIMB 8545 / WDCM 00012 / Crooks</strain>
    </source>
</reference>
<keyword id="KW-0093">Biotin biosynthesis</keyword>
<keyword id="KW-0663">Pyridoxal phosphate</keyword>
<keyword id="KW-0808">Transferase</keyword>
<organism>
    <name type="scientific">Escherichia coli (strain ATCC 8739 / DSM 1576 / NBRC 3972 / NCIMB 8545 / WDCM 00012 / Crooks)</name>
    <dbReference type="NCBI Taxonomy" id="481805"/>
    <lineage>
        <taxon>Bacteria</taxon>
        <taxon>Pseudomonadati</taxon>
        <taxon>Pseudomonadota</taxon>
        <taxon>Gammaproteobacteria</taxon>
        <taxon>Enterobacterales</taxon>
        <taxon>Enterobacteriaceae</taxon>
        <taxon>Escherichia</taxon>
    </lineage>
</organism>